<reference key="1">
    <citation type="journal article" date="2009" name="Genome Res.">
        <title>Comparative genomic analyses of the human fungal pathogens Coccidioides and their relatives.</title>
        <authorList>
            <person name="Sharpton T.J."/>
            <person name="Stajich J.E."/>
            <person name="Rounsley S.D."/>
            <person name="Gardner M.J."/>
            <person name="Wortman J.R."/>
            <person name="Jordar V.S."/>
            <person name="Maiti R."/>
            <person name="Kodira C.D."/>
            <person name="Neafsey D.E."/>
            <person name="Zeng Q."/>
            <person name="Hung C.-Y."/>
            <person name="McMahan C."/>
            <person name="Muszewska A."/>
            <person name="Grynberg M."/>
            <person name="Mandel M.A."/>
            <person name="Kellner E.M."/>
            <person name="Barker B.M."/>
            <person name="Galgiani J.N."/>
            <person name="Orbach M.J."/>
            <person name="Kirkland T.N."/>
            <person name="Cole G.T."/>
            <person name="Henn M.R."/>
            <person name="Birren B.W."/>
            <person name="Taylor J.W."/>
        </authorList>
    </citation>
    <scope>NUCLEOTIDE SEQUENCE [LARGE SCALE GENOMIC DNA]</scope>
    <source>
        <strain>RS</strain>
    </source>
</reference>
<reference key="2">
    <citation type="journal article" date="2010" name="Genome Res.">
        <title>Population genomic sequencing of Coccidioides fungi reveals recent hybridization and transposon control.</title>
        <authorList>
            <person name="Neafsey D.E."/>
            <person name="Barker B.M."/>
            <person name="Sharpton T.J."/>
            <person name="Stajich J.E."/>
            <person name="Park D.J."/>
            <person name="Whiston E."/>
            <person name="Hung C.-Y."/>
            <person name="McMahan C."/>
            <person name="White J."/>
            <person name="Sykes S."/>
            <person name="Heiman D."/>
            <person name="Young S."/>
            <person name="Zeng Q."/>
            <person name="Abouelleil A."/>
            <person name="Aftuck L."/>
            <person name="Bessette D."/>
            <person name="Brown A."/>
            <person name="FitzGerald M."/>
            <person name="Lui A."/>
            <person name="Macdonald J.P."/>
            <person name="Priest M."/>
            <person name="Orbach M.J."/>
            <person name="Galgiani J.N."/>
            <person name="Kirkland T.N."/>
            <person name="Cole G.T."/>
            <person name="Birren B.W."/>
            <person name="Henn M.R."/>
            <person name="Taylor J.W."/>
            <person name="Rounsley S.D."/>
        </authorList>
    </citation>
    <scope>GENOME REANNOTATION</scope>
    <source>
        <strain>RS</strain>
    </source>
</reference>
<sequence>MTSQLITRLLPINSTTSPSIYETIRQYDDDSGHSDTEERAAMAVDEENLDGAYQDYELEGALAQASDTQSTHSSFQSPAAGDSHLPRHPKWTQESVNEAEHDDEVPASLLVEGDGEEDPLPPPPRPPSNRNRILDDAPAAEFCSPRLRGQWEAAEEHQTPHLAPQPSPPLNLHSNRRAGLAFANPKEKAMWRWANVENLDNFLKDVYIYFIGNGIWCIVLSRMLNILTLAFVVGFTTFLTNCVDYRKVPHSKTLNQIIVPKCTNKMSASSTFFLWLFTVFWFGKVFQYIIDFRRLRHMHDFYLYLLDVPDSDIQTISWQEVVGRLMALRDANPATAGTVSTKHRKYIGSQSKQRMDAHDIANRLMRKENYLIALFNKEILDLTLPIPFLRNRQLFSRTLEWNLNLCILDYVFNEQGQLRPLFLKATHRRALSEGLRRRFIFAGVMNIFIAPFIVAYFLMHYFFRYFNEYQKNPSKIGSRQYTPLAEWKFREFNELWHLFERRIHMSYESANMYINQFPKDKTVQLSRFVAFIAGALLSVLALASVIDPELFLGFEITHDRTVLFYIGLFGTVYAVARGVVPDDAQVFDPEHALLDVTAYTHYKPAHWQGKLHSDDVRKEFATLYQLKVVIFLEEILSMIFTPFVLWFSLPKCSDRLIDFFREFTVHVDGLGYVCSFAVFDFKKGTNLMPPEPQHHRPRGLKHGLHDLRGDYFSAKDGKMLASYYGFLDHYAPPARPSGPHASQRQNYPQQPVPGPTHRAQPGANHLHSSRIDRWDNGQHSTMRQSALRTSRFGAITGVGGHASPMASMLLDPHHQPSMSGFRSKAHPTAASRYRPSRQAHPMADTIQDVDEDQLPGINIQPSNVTTTSSGGPATDDSQIEESWRINLAEDANSGEDDEAEDVEKVAGGGGVLGLIHQFQKVTNEGRGAVGM</sequence>
<accession>Q1E6Q3</accession>
<accession>J3KK85</accession>
<proteinExistence type="inferred from homology"/>
<comment type="function">
    <text evidence="2">Phospholipid scramblase involved in autophagy and cytoplasm to vacuole transport (Cvt) vesicle formation. Cycles between the preautophagosomal structure/phagophore assembly site (PAS) and the cytoplasmic vesicle pool and supplies membrane for the growing autophagosome. Lipid scramblase activity plays a key role in preautophagosomal structure/phagophore assembly by distributing the phospholipids that arrive through ATG2 from the cytoplasmic to the luminal leaflet of the bilayer, thereby driving autophagosomal membrane expansion. Required for mitophagy. Also involved in endoplasmic reticulum-specific autophagic process and is essential for the survival of cells subjected to severe ER stress. Different machineries are required for anterograde trafficking to the PAS during either the Cvt pathway or bulk autophagy and for retrograde trafficking.</text>
</comment>
<comment type="catalytic activity">
    <reaction evidence="2">
        <text>a 1,2-diacyl-sn-glycero-3-phosphocholine(in) = a 1,2-diacyl-sn-glycero-3-phosphocholine(out)</text>
        <dbReference type="Rhea" id="RHEA:38571"/>
        <dbReference type="ChEBI" id="CHEBI:57643"/>
    </reaction>
</comment>
<comment type="catalytic activity">
    <reaction evidence="2">
        <text>a 1,2-diacyl-sn-glycero-3-phospho-L-serine(in) = a 1,2-diacyl-sn-glycero-3-phospho-L-serine(out)</text>
        <dbReference type="Rhea" id="RHEA:38663"/>
        <dbReference type="ChEBI" id="CHEBI:57262"/>
    </reaction>
</comment>
<comment type="catalytic activity">
    <reaction evidence="2">
        <text>a 1,2-diacyl-sn-glycero-3-phosphoethanolamine(in) = a 1,2-diacyl-sn-glycero-3-phosphoethanolamine(out)</text>
        <dbReference type="Rhea" id="RHEA:38895"/>
        <dbReference type="ChEBI" id="CHEBI:64612"/>
    </reaction>
</comment>
<comment type="catalytic activity">
    <reaction evidence="2">
        <text>a 1,2-diacyl-sn-glycero-3-phospho-(1D-myo-inositol-3-phosphate)(in) = a 1,2-diacyl-sn-glycero-3-phospho-(1D-myo-inositol-3-phosphate)(out)</text>
        <dbReference type="Rhea" id="RHEA:67920"/>
        <dbReference type="ChEBI" id="CHEBI:58088"/>
    </reaction>
</comment>
<comment type="subunit">
    <text evidence="1">Homotrimer; forms a homotrimer with a central pore that forms a path between the two membrane leaflets.</text>
</comment>
<comment type="subcellular location">
    <subcellularLocation>
        <location evidence="2">Preautophagosomal structure membrane</location>
        <topology evidence="2">Multi-pass membrane protein</topology>
    </subcellularLocation>
    <subcellularLocation>
        <location evidence="2">Cytoplasmic vesicle membrane</location>
        <topology evidence="2">Multi-pass membrane protein</topology>
    </subcellularLocation>
    <subcellularLocation>
        <location evidence="2">Golgi apparatus membrane</location>
        <topology evidence="2">Multi-pass membrane protein</topology>
    </subcellularLocation>
    <subcellularLocation>
        <location evidence="2">Endoplasmic reticulum membrane</location>
        <topology evidence="2">Multi-pass membrane protein</topology>
    </subcellularLocation>
</comment>
<comment type="domain">
    <text evidence="1">Forms a homotrimer with a solvated central pore, which is connected laterally to the cytosol through the cavity within each protomer. Acts as a lipid scramblase that uses its central pore to function: the central pore opens laterally to accommodate lipid headgroups, thereby enabling lipid flipping and redistribution of lipids added to the outer leaflet of ATG9-containing vesicles, thereby enabling growth into autophagosomes.</text>
</comment>
<comment type="PTM">
    <text evidence="2">Phosphorylated by ATG1. ATG1 phosphorylation is required for preautophagosome elongation.</text>
</comment>
<comment type="similarity">
    <text evidence="5">Belongs to the ATG9 family.</text>
</comment>
<keyword id="KW-0072">Autophagy</keyword>
<keyword id="KW-0968">Cytoplasmic vesicle</keyword>
<keyword id="KW-0256">Endoplasmic reticulum</keyword>
<keyword id="KW-0333">Golgi apparatus</keyword>
<keyword id="KW-0445">Lipid transport</keyword>
<keyword id="KW-0472">Membrane</keyword>
<keyword id="KW-0597">Phosphoprotein</keyword>
<keyword id="KW-1185">Reference proteome</keyword>
<keyword id="KW-0812">Transmembrane</keyword>
<keyword id="KW-1133">Transmembrane helix</keyword>
<keyword id="KW-0813">Transport</keyword>
<name>ATG9_COCIM</name>
<dbReference type="EMBL" id="GG704911">
    <property type="protein sequence ID" value="EAS36406.3"/>
    <property type="molecule type" value="Genomic_DNA"/>
</dbReference>
<dbReference type="RefSeq" id="XP_001247989.1">
    <property type="nucleotide sequence ID" value="XM_001247988.2"/>
</dbReference>
<dbReference type="SMR" id="Q1E6Q3"/>
<dbReference type="FunCoup" id="Q1E6Q3">
    <property type="interactions" value="217"/>
</dbReference>
<dbReference type="STRING" id="246410.Q1E6Q3"/>
<dbReference type="GeneID" id="4566782"/>
<dbReference type="KEGG" id="cim:CIMG_01760"/>
<dbReference type="VEuPathDB" id="FungiDB:CIMG_01760"/>
<dbReference type="InParanoid" id="Q1E6Q3"/>
<dbReference type="OMA" id="MMHYFFR"/>
<dbReference type="OrthoDB" id="2020634at2759"/>
<dbReference type="Proteomes" id="UP000001261">
    <property type="component" value="Unassembled WGS sequence"/>
</dbReference>
<dbReference type="GO" id="GO:0005776">
    <property type="term" value="C:autophagosome"/>
    <property type="evidence" value="ECO:0007669"/>
    <property type="project" value="TreeGrafter"/>
</dbReference>
<dbReference type="GO" id="GO:0030659">
    <property type="term" value="C:cytoplasmic vesicle membrane"/>
    <property type="evidence" value="ECO:0007669"/>
    <property type="project" value="UniProtKB-SubCell"/>
</dbReference>
<dbReference type="GO" id="GO:0005789">
    <property type="term" value="C:endoplasmic reticulum membrane"/>
    <property type="evidence" value="ECO:0007669"/>
    <property type="project" value="UniProtKB-SubCell"/>
</dbReference>
<dbReference type="GO" id="GO:0000139">
    <property type="term" value="C:Golgi membrane"/>
    <property type="evidence" value="ECO:0007669"/>
    <property type="project" value="UniProtKB-SubCell"/>
</dbReference>
<dbReference type="GO" id="GO:0034045">
    <property type="term" value="C:phagophore assembly site membrane"/>
    <property type="evidence" value="ECO:0007669"/>
    <property type="project" value="UniProtKB-SubCell"/>
</dbReference>
<dbReference type="GO" id="GO:0000422">
    <property type="term" value="P:autophagy of mitochondrion"/>
    <property type="evidence" value="ECO:0007669"/>
    <property type="project" value="TreeGrafter"/>
</dbReference>
<dbReference type="GO" id="GO:0006869">
    <property type="term" value="P:lipid transport"/>
    <property type="evidence" value="ECO:0007669"/>
    <property type="project" value="UniProtKB-KW"/>
</dbReference>
<dbReference type="GO" id="GO:0034727">
    <property type="term" value="P:piecemeal microautophagy of the nucleus"/>
    <property type="evidence" value="ECO:0007669"/>
    <property type="project" value="TreeGrafter"/>
</dbReference>
<dbReference type="GO" id="GO:0034497">
    <property type="term" value="P:protein localization to phagophore assembly site"/>
    <property type="evidence" value="ECO:0007669"/>
    <property type="project" value="TreeGrafter"/>
</dbReference>
<dbReference type="GO" id="GO:0061709">
    <property type="term" value="P:reticulophagy"/>
    <property type="evidence" value="ECO:0007669"/>
    <property type="project" value="TreeGrafter"/>
</dbReference>
<dbReference type="InterPro" id="IPR007241">
    <property type="entry name" value="Autophagy-rel_prot_9"/>
</dbReference>
<dbReference type="PANTHER" id="PTHR13038">
    <property type="entry name" value="APG9 AUTOPHAGY 9"/>
    <property type="match status" value="1"/>
</dbReference>
<dbReference type="PANTHER" id="PTHR13038:SF10">
    <property type="entry name" value="AUTOPHAGY-RELATED PROTEIN 9"/>
    <property type="match status" value="1"/>
</dbReference>
<dbReference type="Pfam" id="PF04109">
    <property type="entry name" value="ATG9"/>
    <property type="match status" value="1"/>
</dbReference>
<evidence type="ECO:0000250" key="1">
    <source>
        <dbReference type="UniProtKB" id="O74312"/>
    </source>
</evidence>
<evidence type="ECO:0000250" key="2">
    <source>
        <dbReference type="UniProtKB" id="Q12142"/>
    </source>
</evidence>
<evidence type="ECO:0000255" key="3"/>
<evidence type="ECO:0000256" key="4">
    <source>
        <dbReference type="SAM" id="MobiDB-lite"/>
    </source>
</evidence>
<evidence type="ECO:0000305" key="5"/>
<gene>
    <name type="primary">ATG9</name>
    <name type="ORF">CIMG_01760</name>
</gene>
<organism>
    <name type="scientific">Coccidioides immitis (strain RS)</name>
    <name type="common">Valley fever fungus</name>
    <dbReference type="NCBI Taxonomy" id="246410"/>
    <lineage>
        <taxon>Eukaryota</taxon>
        <taxon>Fungi</taxon>
        <taxon>Dikarya</taxon>
        <taxon>Ascomycota</taxon>
        <taxon>Pezizomycotina</taxon>
        <taxon>Eurotiomycetes</taxon>
        <taxon>Eurotiomycetidae</taxon>
        <taxon>Onygenales</taxon>
        <taxon>Onygenaceae</taxon>
        <taxon>Coccidioides</taxon>
    </lineage>
</organism>
<feature type="chain" id="PRO_0000317909" description="Autophagy-related protein 9">
    <location>
        <begin position="1"/>
        <end position="931"/>
    </location>
</feature>
<feature type="topological domain" description="Cytoplasmic" evidence="5">
    <location>
        <begin position="1"/>
        <end position="214"/>
    </location>
</feature>
<feature type="transmembrane region" description="Helical" evidence="3">
    <location>
        <begin position="215"/>
        <end position="235"/>
    </location>
</feature>
<feature type="topological domain" description="Lumenal" evidence="5">
    <location>
        <begin position="236"/>
        <end position="271"/>
    </location>
</feature>
<feature type="transmembrane region" description="Helical" evidence="3">
    <location>
        <begin position="272"/>
        <end position="292"/>
    </location>
</feature>
<feature type="topological domain" description="Cytoplasmic" evidence="5">
    <location>
        <begin position="293"/>
        <end position="438"/>
    </location>
</feature>
<feature type="intramembrane region" evidence="1">
    <location>
        <begin position="439"/>
        <end position="459"/>
    </location>
</feature>
<feature type="topological domain" description="Cytoplasmic" evidence="5">
    <location>
        <begin position="460"/>
        <end position="527"/>
    </location>
</feature>
<feature type="transmembrane region" description="Helical" evidence="3">
    <location>
        <begin position="528"/>
        <end position="548"/>
    </location>
</feature>
<feature type="topological domain" description="Lumenal" evidence="5">
    <location>
        <begin position="549"/>
        <end position="560"/>
    </location>
</feature>
<feature type="transmembrane region" description="Helical" evidence="3">
    <location>
        <begin position="561"/>
        <end position="581"/>
    </location>
</feature>
<feature type="topological domain" description="Cytoplasmic" evidence="5">
    <location>
        <begin position="582"/>
        <end position="627"/>
    </location>
</feature>
<feature type="intramembrane region" evidence="1">
    <location>
        <begin position="628"/>
        <end position="648"/>
    </location>
</feature>
<feature type="topological domain" description="Cytoplasmic" evidence="5">
    <location>
        <begin position="649"/>
        <end position="931"/>
    </location>
</feature>
<feature type="region of interest" description="Disordered" evidence="4">
    <location>
        <begin position="62"/>
        <end position="133"/>
    </location>
</feature>
<feature type="region of interest" description="Disordered" evidence="4">
    <location>
        <begin position="734"/>
        <end position="780"/>
    </location>
</feature>
<feature type="region of interest" description="Disordered" evidence="4">
    <location>
        <begin position="816"/>
        <end position="840"/>
    </location>
</feature>
<feature type="region of interest" description="Disordered" evidence="4">
    <location>
        <begin position="854"/>
        <end position="879"/>
    </location>
</feature>
<feature type="compositionally biased region" description="Polar residues" evidence="4">
    <location>
        <begin position="65"/>
        <end position="77"/>
    </location>
</feature>
<feature type="compositionally biased region" description="Polar residues" evidence="4">
    <location>
        <begin position="740"/>
        <end position="749"/>
    </location>
</feature>
<feature type="compositionally biased region" description="Polar residues" evidence="4">
    <location>
        <begin position="859"/>
        <end position="871"/>
    </location>
</feature>
<protein>
    <recommendedName>
        <fullName>Autophagy-related protein 9</fullName>
    </recommendedName>
</protein>